<feature type="signal peptide" evidence="1">
    <location>
        <begin position="1"/>
        <end position="21"/>
    </location>
</feature>
<feature type="chain" id="PRO_0000017556" description="Accessory gland protein Acp29AB">
    <location>
        <begin position="22"/>
        <end position="234"/>
    </location>
</feature>
<feature type="domain" description="C-type lectin" evidence="2">
    <location>
        <begin position="137"/>
        <end position="234"/>
    </location>
</feature>
<feature type="glycosylation site" description="N-linked (GlcNAc...) asparagine" evidence="1">
    <location>
        <position position="61"/>
    </location>
</feature>
<feature type="glycosylation site" description="N-linked (GlcNAc...) asparagine" evidence="1">
    <location>
        <position position="164"/>
    </location>
</feature>
<feature type="disulfide bond" evidence="2">
    <location>
        <begin position="139"/>
        <end position="228"/>
    </location>
</feature>
<feature type="disulfide bond" evidence="2">
    <location>
        <begin position="207"/>
        <end position="220"/>
    </location>
</feature>
<feature type="sequence variant" description="In strain: SFS 1.2." evidence="5">
    <original>N</original>
    <variation>S</variation>
    <location>
        <position position="27"/>
    </location>
</feature>
<feature type="sequence variant" description="In strain: M26, Ma7, WS16 and WS26." evidence="3 4 6">
    <original>K</original>
    <variation>N</variation>
    <location>
        <position position="29"/>
    </location>
</feature>
<feature type="sequence variant" description="In strain: isofemale line 32, La1, La3, La4, La5, La14, La15, La16, La21, La25, La34, La35, M18, Ma5, Ma8, Ma13, Ma18, Ma20, Ma21, Ma45, Ma48, Ma52, Ma67, Mo1b, Mo52b, Mo80b, NFS 6.1, SFS 1.2, WS6, WS19, Zim26, Zim29, Zim30 and Zim56." evidence="3 4 5 6 8">
    <original>K</original>
    <variation>R</variation>
    <location>
        <position position="59"/>
    </location>
</feature>
<feature type="sequence variant" description="In strain: SFS 1.2." evidence="5">
    <original>K</original>
    <variation>E</variation>
    <location>
        <position position="104"/>
    </location>
</feature>
<feature type="sequence variant" description="In strain: La16 and La35." evidence="3">
    <original>A</original>
    <variation>S</variation>
    <location>
        <position position="105"/>
    </location>
</feature>
<feature type="sequence variant" description="In strain: SFS 2.3." evidence="5">
    <original>N</original>
    <variation>D</variation>
    <location>
        <position position="108"/>
    </location>
</feature>
<feature type="sequence variant" description="In strain: isofemale line 31, isofemale line 32, isofemale line 68, La14, La14, La16, La35, M01, M06, M09, M12, M26, M47, Ma5, Ma7, Ma13, Ma18, Ma20, Ma21, Ma45, Ma48, Ma50, Ma52, Ma67, Mo2b, Mo15b, Mo34a, Mo36a, Mo37a, Mo47a, Mo52b, Mo58b, Mo80b, NFS 5.1, NFS 5.2, NFS 5.4, NFS 6.2, NFS 6.3, NFS 6.4, SFS 1.1, SFS 1.3, SFS 1.4, SFS 2.2, SFS 3.1, SFS 3.3, WS1, WS6, WS9, WS12, WS16, WS26, WS47, WS56, Zim2, Zim26, Zim29, Zim30, Zim32, Zim37, Zim42 and Zim56." evidence="3 4 5 6 8">
    <original>R</original>
    <variation>L</variation>
    <location>
        <position position="113"/>
    </location>
</feature>
<feature type="sequence variant" description="In strain: La1, La21, La25, La3, La34, La35, La4, La5, La6, La9, M01, Mo15b, Mo2b, Mo34a, Mo36a, Mo37a, Mo47a, Mo58b, M06, Mo80b, M09, M12, M18, M26, M47, MA13, MA18, MA20, MA43, MA48, MA50, MA7, MA8, NFS 5.1, NFS 5.2, NFS 5.4, NFS 6.2, NFS 6.3, NFS 6.4, SFS 1.3, SFS 2.2, SFS 3.1, SFS 3.3, WS1, WS12, WS16, WS19, WS26, WS47, WS47, WS56, WS6, WS9, Zim2, Zim26, Zim32, Zim37, isofemale line 31 and isofemale line 68." evidence="3 4 5 6 8">
    <original>M</original>
    <variation>K</variation>
    <location>
        <position position="153"/>
    </location>
</feature>
<feature type="sequence variant" description="In strain: NFS 5.2." evidence="5">
    <original>I</original>
    <variation>V</variation>
    <location>
        <position position="171"/>
    </location>
</feature>
<feature type="sequence variant" description="In strain: Ma7." evidence="3">
    <original>E</original>
    <variation>D</variation>
    <location>
        <position position="214"/>
    </location>
</feature>
<name>A29AB_DROME</name>
<proteinExistence type="evidence at transcript level"/>
<keyword id="KW-0085">Behavior</keyword>
<keyword id="KW-1015">Disulfide bond</keyword>
<keyword id="KW-0325">Glycoprotein</keyword>
<keyword id="KW-0430">Lectin</keyword>
<keyword id="KW-1185">Reference proteome</keyword>
<keyword id="KW-0964">Secreted</keyword>
<keyword id="KW-0732">Signal</keyword>
<protein>
    <recommendedName>
        <fullName>Accessory gland protein Acp29AB</fullName>
    </recommendedName>
</protein>
<organism>
    <name type="scientific">Drosophila melanogaster</name>
    <name type="common">Fruit fly</name>
    <dbReference type="NCBI Taxonomy" id="7227"/>
    <lineage>
        <taxon>Eukaryota</taxon>
        <taxon>Metazoa</taxon>
        <taxon>Ecdysozoa</taxon>
        <taxon>Arthropoda</taxon>
        <taxon>Hexapoda</taxon>
        <taxon>Insecta</taxon>
        <taxon>Pterygota</taxon>
        <taxon>Neoptera</taxon>
        <taxon>Endopterygota</taxon>
        <taxon>Diptera</taxon>
        <taxon>Brachycera</taxon>
        <taxon>Muscomorpha</taxon>
        <taxon>Ephydroidea</taxon>
        <taxon>Drosophilidae</taxon>
        <taxon>Drosophila</taxon>
        <taxon>Sophophora</taxon>
    </lineage>
</organism>
<sequence>MYASNLLYLLALWNLWDLSGGQQDIPNGKATLPSPQTPQNTIDQIGINQNYWFTYNALKQNETLAIIDTMEMRIASSLLEFKAQMEIQLQPLKIIMRHHASNIKASNNIKMRRFEKVGSRHFHIEKNLMQTWFEAYVTCRKMNGHLANIQDEMELDGILALAPNNSYWIDISKLVENGGTFVSTLTGREPFFVKWKSNQDTKKKNQCVYIYAKEMSYDECFEKKSFVCQADQWA</sequence>
<gene>
    <name type="primary">Acp29AB</name>
    <name type="ORF">CG17797</name>
</gene>
<dbReference type="EMBL" id="U85758">
    <property type="protein sequence ID" value="AAB96382.1"/>
    <property type="molecule type" value="mRNA"/>
</dbReference>
<dbReference type="EMBL" id="AJ240513">
    <property type="protein sequence ID" value="CAB53187.1"/>
    <property type="molecule type" value="Genomic_DNA"/>
</dbReference>
<dbReference type="EMBL" id="AJ240514">
    <property type="protein sequence ID" value="CAB53188.1"/>
    <property type="molecule type" value="Genomic_DNA"/>
</dbReference>
<dbReference type="EMBL" id="AJ240515">
    <property type="protein sequence ID" value="CAB53189.1"/>
    <property type="molecule type" value="Genomic_DNA"/>
</dbReference>
<dbReference type="EMBL" id="AJ240516">
    <property type="protein sequence ID" value="CAB53190.1"/>
    <property type="molecule type" value="Genomic_DNA"/>
</dbReference>
<dbReference type="EMBL" id="AJ240517">
    <property type="protein sequence ID" value="CAB53191.1"/>
    <property type="molecule type" value="Genomic_DNA"/>
</dbReference>
<dbReference type="EMBL" id="AJ240518">
    <property type="protein sequence ID" value="CAB53192.1"/>
    <property type="molecule type" value="Genomic_DNA"/>
</dbReference>
<dbReference type="EMBL" id="AJ240519">
    <property type="protein sequence ID" value="CAB53193.1"/>
    <property type="molecule type" value="Genomic_DNA"/>
</dbReference>
<dbReference type="EMBL" id="AJ240520">
    <property type="protein sequence ID" value="CAB53194.1"/>
    <property type="molecule type" value="Genomic_DNA"/>
</dbReference>
<dbReference type="EMBL" id="AJ240521">
    <property type="protein sequence ID" value="CAB53195.1"/>
    <property type="molecule type" value="Genomic_DNA"/>
</dbReference>
<dbReference type="EMBL" id="AJ240522">
    <property type="protein sequence ID" value="CAB53196.1"/>
    <property type="molecule type" value="Genomic_DNA"/>
</dbReference>
<dbReference type="EMBL" id="AJ240523">
    <property type="protein sequence ID" value="CAB53197.1"/>
    <property type="molecule type" value="Genomic_DNA"/>
</dbReference>
<dbReference type="EMBL" id="AJ240524">
    <property type="protein sequence ID" value="CAB53198.1"/>
    <property type="molecule type" value="Genomic_DNA"/>
</dbReference>
<dbReference type="EMBL" id="AJ240525">
    <property type="protein sequence ID" value="CAB53199.1"/>
    <property type="molecule type" value="Genomic_DNA"/>
</dbReference>
<dbReference type="EMBL" id="AJ240526">
    <property type="protein sequence ID" value="CAB53200.1"/>
    <property type="molecule type" value="Genomic_DNA"/>
</dbReference>
<dbReference type="EMBL" id="AJ240527">
    <property type="protein sequence ID" value="CAB53201.1"/>
    <property type="molecule type" value="Genomic_DNA"/>
</dbReference>
<dbReference type="EMBL" id="AJ240528">
    <property type="protein sequence ID" value="CAB53202.1"/>
    <property type="molecule type" value="Genomic_DNA"/>
</dbReference>
<dbReference type="EMBL" id="AJ240529">
    <property type="protein sequence ID" value="CAB53203.1"/>
    <property type="molecule type" value="Genomic_DNA"/>
</dbReference>
<dbReference type="EMBL" id="AJ240530">
    <property type="protein sequence ID" value="CAB53204.1"/>
    <property type="molecule type" value="Genomic_DNA"/>
</dbReference>
<dbReference type="EMBL" id="AJ240531">
    <property type="protein sequence ID" value="CAB53205.1"/>
    <property type="molecule type" value="Genomic_DNA"/>
</dbReference>
<dbReference type="EMBL" id="AJ240532">
    <property type="protein sequence ID" value="CAB53206.1"/>
    <property type="molecule type" value="Genomic_DNA"/>
</dbReference>
<dbReference type="EMBL" id="AJ240533">
    <property type="protein sequence ID" value="CAB53207.1"/>
    <property type="molecule type" value="Genomic_DNA"/>
</dbReference>
<dbReference type="EMBL" id="AJ240534">
    <property type="protein sequence ID" value="CAB53208.1"/>
    <property type="molecule type" value="Genomic_DNA"/>
</dbReference>
<dbReference type="EMBL" id="AJ240535">
    <property type="protein sequence ID" value="CAB53209.1"/>
    <property type="molecule type" value="Genomic_DNA"/>
</dbReference>
<dbReference type="EMBL" id="AJ240536">
    <property type="protein sequence ID" value="CAB53210.1"/>
    <property type="molecule type" value="Genomic_DNA"/>
</dbReference>
<dbReference type="EMBL" id="AJ240537">
    <property type="protein sequence ID" value="CAB53211.1"/>
    <property type="molecule type" value="Genomic_DNA"/>
</dbReference>
<dbReference type="EMBL" id="AJ240538">
    <property type="protein sequence ID" value="CAB53212.1"/>
    <property type="molecule type" value="Genomic_DNA"/>
</dbReference>
<dbReference type="EMBL" id="AJ240539">
    <property type="protein sequence ID" value="CAB53213.1"/>
    <property type="molecule type" value="Genomic_DNA"/>
</dbReference>
<dbReference type="EMBL" id="AJ240540">
    <property type="protein sequence ID" value="CAB53214.1"/>
    <property type="molecule type" value="Genomic_DNA"/>
</dbReference>
<dbReference type="EMBL" id="AJ240541">
    <property type="protein sequence ID" value="CAB53215.1"/>
    <property type="molecule type" value="Genomic_DNA"/>
</dbReference>
<dbReference type="EMBL" id="AJ240542">
    <property type="protein sequence ID" value="CAB53216.1"/>
    <property type="molecule type" value="Genomic_DNA"/>
</dbReference>
<dbReference type="EMBL" id="AJ240543">
    <property type="protein sequence ID" value="CAB53217.1"/>
    <property type="molecule type" value="Genomic_DNA"/>
</dbReference>
<dbReference type="EMBL" id="AJ240544">
    <property type="protein sequence ID" value="CAB53218.1"/>
    <property type="molecule type" value="Genomic_DNA"/>
</dbReference>
<dbReference type="EMBL" id="AJ240545">
    <property type="protein sequence ID" value="CAB53219.1"/>
    <property type="molecule type" value="Genomic_DNA"/>
</dbReference>
<dbReference type="EMBL" id="AJ240546">
    <property type="protein sequence ID" value="CAB53220.1"/>
    <property type="molecule type" value="Genomic_DNA"/>
</dbReference>
<dbReference type="EMBL" id="AJ240547">
    <property type="protein sequence ID" value="CAB53221.1"/>
    <property type="molecule type" value="Genomic_DNA"/>
</dbReference>
<dbReference type="EMBL" id="AJ240548">
    <property type="protein sequence ID" value="CAB53222.1"/>
    <property type="molecule type" value="Genomic_DNA"/>
</dbReference>
<dbReference type="EMBL" id="AJ240549">
    <property type="protein sequence ID" value="CAB53223.1"/>
    <property type="molecule type" value="Genomic_DNA"/>
</dbReference>
<dbReference type="EMBL" id="AJ240550">
    <property type="protein sequence ID" value="CAB53224.1"/>
    <property type="molecule type" value="Genomic_DNA"/>
</dbReference>
<dbReference type="EMBL" id="AJ240551">
    <property type="protein sequence ID" value="CAB53225.1"/>
    <property type="molecule type" value="Genomic_DNA"/>
</dbReference>
<dbReference type="EMBL" id="AY010527">
    <property type="protein sequence ID" value="AAG32559.1"/>
    <property type="molecule type" value="Genomic_DNA"/>
</dbReference>
<dbReference type="EMBL" id="AY010528">
    <property type="protein sequence ID" value="AAG32560.1"/>
    <property type="molecule type" value="Genomic_DNA"/>
</dbReference>
<dbReference type="EMBL" id="AY010529">
    <property type="protein sequence ID" value="AAG32561.1"/>
    <property type="molecule type" value="Genomic_DNA"/>
</dbReference>
<dbReference type="EMBL" id="AY010530">
    <property type="protein sequence ID" value="AAG32562.1"/>
    <property type="molecule type" value="Genomic_DNA"/>
</dbReference>
<dbReference type="EMBL" id="AY010531">
    <property type="protein sequence ID" value="AAG32563.1"/>
    <property type="molecule type" value="Genomic_DNA"/>
</dbReference>
<dbReference type="EMBL" id="AY010532">
    <property type="protein sequence ID" value="AAG32564.1"/>
    <property type="molecule type" value="Genomic_DNA"/>
</dbReference>
<dbReference type="EMBL" id="AY010533">
    <property type="protein sequence ID" value="AAG32565.1"/>
    <property type="molecule type" value="Genomic_DNA"/>
</dbReference>
<dbReference type="EMBL" id="AY010534">
    <property type="protein sequence ID" value="AAG32566.1"/>
    <property type="molecule type" value="Genomic_DNA"/>
</dbReference>
<dbReference type="EMBL" id="AY010535">
    <property type="protein sequence ID" value="AAG32567.1"/>
    <property type="molecule type" value="Genomic_DNA"/>
</dbReference>
<dbReference type="EMBL" id="AY010536">
    <property type="protein sequence ID" value="AAG32568.1"/>
    <property type="molecule type" value="Genomic_DNA"/>
</dbReference>
<dbReference type="EMBL" id="AY010537">
    <property type="protein sequence ID" value="AAG32569.1"/>
    <property type="molecule type" value="Genomic_DNA"/>
</dbReference>
<dbReference type="EMBL" id="AY010538">
    <property type="protein sequence ID" value="AAG32570.1"/>
    <property type="molecule type" value="Genomic_DNA"/>
</dbReference>
<dbReference type="EMBL" id="AY010539">
    <property type="protein sequence ID" value="AAG32571.1"/>
    <property type="molecule type" value="Genomic_DNA"/>
</dbReference>
<dbReference type="EMBL" id="AY010540">
    <property type="protein sequence ID" value="AAG32572.1"/>
    <property type="molecule type" value="Genomic_DNA"/>
</dbReference>
<dbReference type="EMBL" id="AY010541">
    <property type="protein sequence ID" value="AAG32573.1"/>
    <property type="molecule type" value="Genomic_DNA"/>
</dbReference>
<dbReference type="EMBL" id="AY010542">
    <property type="protein sequence ID" value="AAG32574.1"/>
    <property type="molecule type" value="Genomic_DNA"/>
</dbReference>
<dbReference type="EMBL" id="AY010543">
    <property type="protein sequence ID" value="AAG32575.1"/>
    <property type="molecule type" value="Genomic_DNA"/>
</dbReference>
<dbReference type="EMBL" id="AY344305">
    <property type="protein sequence ID" value="AAR05024.1"/>
    <property type="molecule type" value="Genomic_DNA"/>
</dbReference>
<dbReference type="EMBL" id="AY344306">
    <property type="protein sequence ID" value="AAR05025.1"/>
    <property type="molecule type" value="Genomic_DNA"/>
</dbReference>
<dbReference type="EMBL" id="AY344307">
    <property type="protein sequence ID" value="AAR05026.1"/>
    <property type="molecule type" value="Genomic_DNA"/>
</dbReference>
<dbReference type="EMBL" id="AY344308">
    <property type="protein sequence ID" value="AAR05027.1"/>
    <property type="molecule type" value="Genomic_DNA"/>
</dbReference>
<dbReference type="EMBL" id="AY344309">
    <property type="protein sequence ID" value="AAR05028.1"/>
    <property type="molecule type" value="Genomic_DNA"/>
</dbReference>
<dbReference type="EMBL" id="AY344310">
    <property type="protein sequence ID" value="AAR05029.1"/>
    <property type="molecule type" value="Genomic_DNA"/>
</dbReference>
<dbReference type="EMBL" id="AY344311">
    <property type="protein sequence ID" value="AAR05030.1"/>
    <property type="molecule type" value="Genomic_DNA"/>
</dbReference>
<dbReference type="EMBL" id="AY344312">
    <property type="protein sequence ID" value="AAR05031.1"/>
    <property type="molecule type" value="Genomic_DNA"/>
</dbReference>
<dbReference type="EMBL" id="AY344313">
    <property type="protein sequence ID" value="AAR05032.1"/>
    <property type="molecule type" value="Genomic_DNA"/>
</dbReference>
<dbReference type="EMBL" id="AY344314">
    <property type="protein sequence ID" value="AAR05033.1"/>
    <property type="molecule type" value="Genomic_DNA"/>
</dbReference>
<dbReference type="EMBL" id="AY344315">
    <property type="protein sequence ID" value="AAR05034.1"/>
    <property type="molecule type" value="Genomic_DNA"/>
</dbReference>
<dbReference type="EMBL" id="AY344316">
    <property type="protein sequence ID" value="AAR05035.1"/>
    <property type="molecule type" value="Genomic_DNA"/>
</dbReference>
<dbReference type="EMBL" id="AY344317">
    <property type="protein sequence ID" value="AAR05036.1"/>
    <property type="molecule type" value="Genomic_DNA"/>
</dbReference>
<dbReference type="EMBL" id="AY344318">
    <property type="protein sequence ID" value="AAR05037.1"/>
    <property type="molecule type" value="Genomic_DNA"/>
</dbReference>
<dbReference type="EMBL" id="AY344319">
    <property type="protein sequence ID" value="AAR05038.1"/>
    <property type="molecule type" value="Genomic_DNA"/>
</dbReference>
<dbReference type="EMBL" id="AY344320">
    <property type="protein sequence ID" value="AAR05039.1"/>
    <property type="molecule type" value="Genomic_DNA"/>
</dbReference>
<dbReference type="EMBL" id="AY344321">
    <property type="protein sequence ID" value="AAR05040.1"/>
    <property type="molecule type" value="Genomic_DNA"/>
</dbReference>
<dbReference type="EMBL" id="AY344322">
    <property type="protein sequence ID" value="AAR05041.1"/>
    <property type="molecule type" value="Genomic_DNA"/>
</dbReference>
<dbReference type="EMBL" id="AY344323">
    <property type="protein sequence ID" value="AAR05042.1"/>
    <property type="molecule type" value="Genomic_DNA"/>
</dbReference>
<dbReference type="EMBL" id="AY344324">
    <property type="protein sequence ID" value="AAR05043.1"/>
    <property type="molecule type" value="Genomic_DNA"/>
</dbReference>
<dbReference type="EMBL" id="AY635210">
    <property type="protein sequence ID" value="AAT49116.1"/>
    <property type="molecule type" value="Genomic_DNA"/>
</dbReference>
<dbReference type="EMBL" id="AY635211">
    <property type="protein sequence ID" value="AAT49117.1"/>
    <property type="molecule type" value="Genomic_DNA"/>
</dbReference>
<dbReference type="EMBL" id="AY635212">
    <property type="protein sequence ID" value="AAT49118.1"/>
    <property type="molecule type" value="Genomic_DNA"/>
</dbReference>
<dbReference type="EMBL" id="AY635213">
    <property type="protein sequence ID" value="AAT49119.1"/>
    <property type="molecule type" value="Genomic_DNA"/>
</dbReference>
<dbReference type="EMBL" id="AY635214">
    <property type="protein sequence ID" value="AAT49120.1"/>
    <property type="molecule type" value="Genomic_DNA"/>
</dbReference>
<dbReference type="EMBL" id="AY635215">
    <property type="protein sequence ID" value="AAT49121.1"/>
    <property type="molecule type" value="Genomic_DNA"/>
</dbReference>
<dbReference type="EMBL" id="AY635216">
    <property type="protein sequence ID" value="AAT49122.1"/>
    <property type="molecule type" value="Genomic_DNA"/>
</dbReference>
<dbReference type="EMBL" id="AY635217">
    <property type="protein sequence ID" value="AAT49123.1"/>
    <property type="molecule type" value="Genomic_DNA"/>
</dbReference>
<dbReference type="EMBL" id="DQ015761">
    <property type="protein sequence ID" value="AAY86166.1"/>
    <property type="molecule type" value="Genomic_DNA"/>
</dbReference>
<dbReference type="EMBL" id="DQ015762">
    <property type="protein sequence ID" value="AAY86167.1"/>
    <property type="molecule type" value="Genomic_DNA"/>
</dbReference>
<dbReference type="EMBL" id="DQ015763">
    <property type="protein sequence ID" value="AAY86168.1"/>
    <property type="molecule type" value="Genomic_DNA"/>
</dbReference>
<dbReference type="EMBL" id="AE014134">
    <property type="protein sequence ID" value="AAF52665.1"/>
    <property type="molecule type" value="Genomic_DNA"/>
</dbReference>
<dbReference type="RefSeq" id="NP_523512.2">
    <property type="nucleotide sequence ID" value="NM_078788.3"/>
</dbReference>
<dbReference type="SMR" id="O46197"/>
<dbReference type="BioGRID" id="60286">
    <property type="interactions" value="3"/>
</dbReference>
<dbReference type="FunCoup" id="O46197">
    <property type="interactions" value="38"/>
</dbReference>
<dbReference type="IntAct" id="O46197">
    <property type="interactions" value="3"/>
</dbReference>
<dbReference type="STRING" id="7227.FBpp0079321"/>
<dbReference type="GlyCosmos" id="O46197">
    <property type="glycosylation" value="2 sites, No reported glycans"/>
</dbReference>
<dbReference type="GlyGen" id="O46197">
    <property type="glycosylation" value="2 sites"/>
</dbReference>
<dbReference type="PaxDb" id="7227-FBpp0079321"/>
<dbReference type="DNASU" id="34162"/>
<dbReference type="EnsemblMetazoa" id="FBtr0079716">
    <property type="protein sequence ID" value="FBpp0079321"/>
    <property type="gene ID" value="FBgn0015583"/>
</dbReference>
<dbReference type="GeneID" id="34162"/>
<dbReference type="KEGG" id="dme:Dmel_CG17797"/>
<dbReference type="AGR" id="FB:FBgn0015583"/>
<dbReference type="CTD" id="34162"/>
<dbReference type="FlyBase" id="FBgn0015583">
    <property type="gene designation" value="Acp29AB"/>
</dbReference>
<dbReference type="VEuPathDB" id="VectorBase:FBgn0015583"/>
<dbReference type="eggNOG" id="KOG4297">
    <property type="taxonomic scope" value="Eukaryota"/>
</dbReference>
<dbReference type="GeneTree" id="ENSGT00650000093533"/>
<dbReference type="HOGENOM" id="CLU_049894_13_0_1"/>
<dbReference type="InParanoid" id="O46197"/>
<dbReference type="OMA" id="MNGHLAN"/>
<dbReference type="OrthoDB" id="7357196at2759"/>
<dbReference type="PhylomeDB" id="O46197"/>
<dbReference type="Reactome" id="R-DME-1236978">
    <property type="pathway name" value="Cross-presentation of soluble exogenous antigens (endosomes)"/>
</dbReference>
<dbReference type="Reactome" id="R-DME-1482788">
    <property type="pathway name" value="Acyl chain remodelling of PC"/>
</dbReference>
<dbReference type="Reactome" id="R-DME-1482801">
    <property type="pathway name" value="Acyl chain remodelling of PS"/>
</dbReference>
<dbReference type="Reactome" id="R-DME-1482839">
    <property type="pathway name" value="Acyl chain remodelling of PE"/>
</dbReference>
<dbReference type="Reactome" id="R-DME-1482922">
    <property type="pathway name" value="Acyl chain remodelling of PI"/>
</dbReference>
<dbReference type="Reactome" id="R-DME-1482925">
    <property type="pathway name" value="Acyl chain remodelling of PG"/>
</dbReference>
<dbReference type="Reactome" id="R-DME-1483166">
    <property type="pathway name" value="Synthesis of PA"/>
</dbReference>
<dbReference type="Reactome" id="R-DME-6803157">
    <property type="pathway name" value="Antimicrobial peptides"/>
</dbReference>
<dbReference type="SignaLink" id="O46197"/>
<dbReference type="BioGRID-ORCS" id="34162">
    <property type="hits" value="0 hits in 1 CRISPR screen"/>
</dbReference>
<dbReference type="GenomeRNAi" id="34162"/>
<dbReference type="PRO" id="PR:O46197"/>
<dbReference type="Proteomes" id="UP000000803">
    <property type="component" value="Chromosome 2L"/>
</dbReference>
<dbReference type="Bgee" id="FBgn0015583">
    <property type="expression patterns" value="Expressed in spermatid in male reproductive gland and 18 other cell types or tissues"/>
</dbReference>
<dbReference type="ExpressionAtlas" id="O46197">
    <property type="expression patterns" value="baseline and differential"/>
</dbReference>
<dbReference type="GO" id="GO:0005615">
    <property type="term" value="C:extracellular space"/>
    <property type="evidence" value="ECO:0007005"/>
    <property type="project" value="FlyBase"/>
</dbReference>
<dbReference type="GO" id="GO:0030246">
    <property type="term" value="F:carbohydrate binding"/>
    <property type="evidence" value="ECO:0000250"/>
    <property type="project" value="FlyBase"/>
</dbReference>
<dbReference type="GO" id="GO:0005534">
    <property type="term" value="F:galactose binding"/>
    <property type="evidence" value="ECO:0000250"/>
    <property type="project" value="FlyBase"/>
</dbReference>
<dbReference type="GO" id="GO:0038023">
    <property type="term" value="F:signaling receptor activity"/>
    <property type="evidence" value="ECO:0000318"/>
    <property type="project" value="GO_Central"/>
</dbReference>
<dbReference type="GO" id="GO:0019953">
    <property type="term" value="P:sexual reproduction"/>
    <property type="evidence" value="ECO:0007007"/>
    <property type="project" value="FlyBase"/>
</dbReference>
<dbReference type="GO" id="GO:0046692">
    <property type="term" value="P:sperm competition"/>
    <property type="evidence" value="ECO:0000315"/>
    <property type="project" value="FlyBase"/>
</dbReference>
<dbReference type="GO" id="GO:0046693">
    <property type="term" value="P:sperm storage"/>
    <property type="evidence" value="ECO:0000315"/>
    <property type="project" value="FlyBase"/>
</dbReference>
<dbReference type="CDD" id="cd00037">
    <property type="entry name" value="CLECT"/>
    <property type="match status" value="1"/>
</dbReference>
<dbReference type="Gene3D" id="3.10.100.10">
    <property type="entry name" value="Mannose-Binding Protein A, subunit A"/>
    <property type="match status" value="1"/>
</dbReference>
<dbReference type="InterPro" id="IPR001304">
    <property type="entry name" value="C-type_lectin-like"/>
</dbReference>
<dbReference type="InterPro" id="IPR016186">
    <property type="entry name" value="C-type_lectin-like/link_sf"/>
</dbReference>
<dbReference type="InterPro" id="IPR016187">
    <property type="entry name" value="CTDL_fold"/>
</dbReference>
<dbReference type="Pfam" id="PF00059">
    <property type="entry name" value="Lectin_C"/>
    <property type="match status" value="1"/>
</dbReference>
<dbReference type="SMART" id="SM00034">
    <property type="entry name" value="CLECT"/>
    <property type="match status" value="1"/>
</dbReference>
<dbReference type="SUPFAM" id="SSF56436">
    <property type="entry name" value="C-type lectin-like"/>
    <property type="match status" value="1"/>
</dbReference>
<dbReference type="PROSITE" id="PS50041">
    <property type="entry name" value="C_TYPE_LECTIN_2"/>
    <property type="match status" value="1"/>
</dbReference>
<comment type="function">
    <text evidence="7">Responsible for physiological and behavioral changes in mated female flies.</text>
</comment>
<comment type="subcellular location">
    <subcellularLocation>
        <location evidence="9">Secreted</location>
    </subcellularLocation>
</comment>
<comment type="tissue specificity">
    <text evidence="7">Main cells of the accessory gland and in seminal fluid.</text>
</comment>
<accession>O46197</accession>
<accession>Q0HA35</accession>
<accession>Q6GUY6</accession>
<accession>Q6GUY7</accession>
<accession>Q6GUY8</accession>
<accession>Q6GUZ1</accession>
<accession>Q6VBE9</accession>
<accession>Q6VBF0</accession>
<accession>Q6VBF1</accession>
<accession>Q6VBF2</accession>
<accession>Q6VBF4</accession>
<accession>Q6VBF5</accession>
<accession>Q6VBF6</accession>
<accession>Q6VBF7</accession>
<accession>Q9TVT3</accession>
<accession>Q9TW05</accession>
<accession>Q9TW06</accession>
<accession>Q9TW07</accession>
<accession>Q9U976</accession>
<accession>Q9U977</accession>
<accession>Q9U978</accession>
<accession>Q9U979</accession>
<accession>Q9V3Q5</accession>
<reference key="1">
    <citation type="journal article" date="1997" name="Insect Biochem. Mol. Biol.">
        <title>New genes for male accessory gland proteins in Drosophila melanogaster.</title>
        <authorList>
            <person name="Wolfner M.F."/>
            <person name="Harada H.A."/>
            <person name="Bertram M.J."/>
            <person name="Stelick T.J."/>
            <person name="Kraus K.W."/>
            <person name="Kalb J.M."/>
            <person name="Lung Y.O."/>
            <person name="Neubaum D.M."/>
            <person name="Park M."/>
            <person name="Tram U.K."/>
        </authorList>
    </citation>
    <scope>NUCLEOTIDE SEQUENCE [MRNA]</scope>
    <scope>FUNCTION</scope>
    <scope>TISSUE SPECIFICITY</scope>
    <source>
        <strain>Canton-S</strain>
        <tissue>Male accessory gland</tissue>
    </source>
</reference>
<reference key="2">
    <citation type="journal article" date="1999" name="Genetics">
        <title>Positive selection drives the evolution of the Acp29AB accessory gland protein in Drosophila.</title>
        <authorList>
            <person name="Aguade M."/>
        </authorList>
    </citation>
    <scope>NUCLEOTIDE SEQUENCE [GENOMIC DNA]</scope>
    <scope>VARIANTS ASN-29; ARG-59; SER-105; LEU-113; LYS-153 AND ASP-214</scope>
    <source>
        <strain>La1</strain>
        <strain>La13</strain>
        <strain>La14</strain>
        <strain>La15</strain>
        <strain>La16</strain>
        <strain>La21</strain>
        <strain>La25</strain>
        <strain>La3</strain>
        <strain>La34</strain>
        <strain>La35</strain>
        <strain>La4</strain>
        <strain>La5</strain>
        <strain>La6</strain>
        <strain>La9</strain>
        <strain>Ma13</strain>
        <strain>Ma18</strain>
        <strain>Ma20</strain>
        <strain>Ma21</strain>
        <strain>Ma43</strain>
        <strain>Ma45</strain>
        <strain>Ma48</strain>
        <strain>Ma5</strain>
        <strain>Ma50</strain>
        <strain>Ma52</strain>
        <strain>Ma67</strain>
        <strain>Ma7</strain>
        <strain>Ma8</strain>
        <strain>Mo15b</strain>
        <strain>Mo1b</strain>
        <strain>Mo2b</strain>
        <strain>Mo34a</strain>
        <strain>Mo36a</strain>
        <strain>Mo37a</strain>
        <strain>Mo40b</strain>
        <strain>Mo47a</strain>
        <strain>Mo52b</strain>
        <strain>Mo58b</strain>
        <strain>Mo80b</strain>
        <strain>Mo8b</strain>
    </source>
</reference>
<reference key="3">
    <citation type="journal article" date="2000" name="Genetics">
        <title>Molecular population genetics of male accessory gland proteins in Drosophila.</title>
        <authorList>
            <person name="Begun D.J."/>
            <person name="Whitley P."/>
            <person name="Todd B.L."/>
            <person name="Waldrip-Dail H.M."/>
            <person name="Clark A.G."/>
        </authorList>
    </citation>
    <scope>NUCLEOTIDE SEQUENCE [GENOMIC DNA]</scope>
    <scope>VARIANTS ASN-29; ARG-59; LEU-113 AND LYS-153</scope>
    <source>
        <strain>WS1</strain>
        <strain>WS12</strain>
        <strain>WS16</strain>
        <strain>WS19</strain>
        <strain>WS26</strain>
        <strain>WS47</strain>
        <strain>WS56</strain>
        <strain>WS6</strain>
        <strain>WS9</strain>
        <strain>Zim2</strain>
        <strain>Zim26</strain>
        <strain>Zim29</strain>
        <strain>Zim30</strain>
        <strain>Zim32</strain>
        <strain>Zim37</strain>
        <strain>Zim42</strain>
        <strain>Zim56</strain>
    </source>
</reference>
<reference key="4">
    <citation type="journal article" date="2003" name="Evolution">
        <title>Population genetics of accessory gland proteins and sexual behavior in Drosophila melanogaster populations from Evolution Canyon.</title>
        <authorList>
            <person name="Panhuis T.M."/>
            <person name="Swanson W.J."/>
            <person name="Nunney L."/>
        </authorList>
    </citation>
    <scope>NUCLEOTIDE SEQUENCE [GENOMIC DNA]</scope>
    <scope>VARIANTS SER-27; ARG-59; GLU-104; ASP-108; LEU-113; LYS-153 AND VAL-171</scope>
    <source>
        <strain>NFS 5.1</strain>
        <strain>NFS 5.2</strain>
        <strain>NFS 5.3</strain>
        <strain>NFS 5.4</strain>
        <strain>NFS 6.1</strain>
        <strain>NFS 6.2</strain>
        <strain>NFS 6.3</strain>
        <strain>NFS 6.4</strain>
        <strain>NFS 7.8</strain>
        <strain>SFS 1.1</strain>
        <strain>SFS 1.2</strain>
        <strain>SFS 1.3</strain>
        <strain>SFS 1.4</strain>
        <strain>SFS 2.2</strain>
        <strain>SFS 2.3</strain>
        <strain>SFS 2.4</strain>
        <strain>SFS 3.1</strain>
        <strain>SFS 3.2</strain>
        <strain>SFS 3.3</strain>
        <strain>SFS 3.4</strain>
    </source>
</reference>
<reference key="5">
    <citation type="journal article" date="2004" name="Mol. Biol. Evol.">
        <title>Molecular evolution and population genetics of duplicated accessory gland protein genes in Drosophila.</title>
        <authorList>
            <person name="Holloway A.K."/>
            <person name="Begun D.J."/>
        </authorList>
    </citation>
    <scope>NUCLEOTIDE SEQUENCE [GENOMIC DNA]</scope>
    <scope>VARIANTS ASN-29; ARG-59; LEU-113 AND LYS-153</scope>
    <source>
        <strain>M01</strain>
        <strain>M06</strain>
        <strain>M09</strain>
        <strain>M12</strain>
        <strain>M18</strain>
        <strain>M26</strain>
        <strain>M39</strain>
        <strain>M47</strain>
    </source>
</reference>
<reference key="6">
    <citation type="submission" date="2005-04" db="EMBL/GenBank/DDBJ databases">
        <title>Accessory gland protein involvement in post-mating inbreeding avoidance in Drosophila melanogaster.</title>
        <authorList>
            <person name="Panhuis T.M."/>
            <person name="Nunney L."/>
        </authorList>
    </citation>
    <scope>NUCLEOTIDE SEQUENCE [GENOMIC DNA]</scope>
    <scope>VARIANTS ARG-59; LEU-113 AND LYS-153</scope>
    <source>
        <strain>isofemale line 31</strain>
        <strain>isofemale line 32</strain>
        <strain>isofemale line 68</strain>
    </source>
</reference>
<reference key="7">
    <citation type="journal article" date="2000" name="Science">
        <title>The genome sequence of Drosophila melanogaster.</title>
        <authorList>
            <person name="Adams M.D."/>
            <person name="Celniker S.E."/>
            <person name="Holt R.A."/>
            <person name="Evans C.A."/>
            <person name="Gocayne J.D."/>
            <person name="Amanatides P.G."/>
            <person name="Scherer S.E."/>
            <person name="Li P.W."/>
            <person name="Hoskins R.A."/>
            <person name="Galle R.F."/>
            <person name="George R.A."/>
            <person name="Lewis S.E."/>
            <person name="Richards S."/>
            <person name="Ashburner M."/>
            <person name="Henderson S.N."/>
            <person name="Sutton G.G."/>
            <person name="Wortman J.R."/>
            <person name="Yandell M.D."/>
            <person name="Zhang Q."/>
            <person name="Chen L.X."/>
            <person name="Brandon R.C."/>
            <person name="Rogers Y.-H.C."/>
            <person name="Blazej R.G."/>
            <person name="Champe M."/>
            <person name="Pfeiffer B.D."/>
            <person name="Wan K.H."/>
            <person name="Doyle C."/>
            <person name="Baxter E.G."/>
            <person name="Helt G."/>
            <person name="Nelson C.R."/>
            <person name="Miklos G.L.G."/>
            <person name="Abril J.F."/>
            <person name="Agbayani A."/>
            <person name="An H.-J."/>
            <person name="Andrews-Pfannkoch C."/>
            <person name="Baldwin D."/>
            <person name="Ballew R.M."/>
            <person name="Basu A."/>
            <person name="Baxendale J."/>
            <person name="Bayraktaroglu L."/>
            <person name="Beasley E.M."/>
            <person name="Beeson K.Y."/>
            <person name="Benos P.V."/>
            <person name="Berman B.P."/>
            <person name="Bhandari D."/>
            <person name="Bolshakov S."/>
            <person name="Borkova D."/>
            <person name="Botchan M.R."/>
            <person name="Bouck J."/>
            <person name="Brokstein P."/>
            <person name="Brottier P."/>
            <person name="Burtis K.C."/>
            <person name="Busam D.A."/>
            <person name="Butler H."/>
            <person name="Cadieu E."/>
            <person name="Center A."/>
            <person name="Chandra I."/>
            <person name="Cherry J.M."/>
            <person name="Cawley S."/>
            <person name="Dahlke C."/>
            <person name="Davenport L.B."/>
            <person name="Davies P."/>
            <person name="de Pablos B."/>
            <person name="Delcher A."/>
            <person name="Deng Z."/>
            <person name="Mays A.D."/>
            <person name="Dew I."/>
            <person name="Dietz S.M."/>
            <person name="Dodson K."/>
            <person name="Doup L.E."/>
            <person name="Downes M."/>
            <person name="Dugan-Rocha S."/>
            <person name="Dunkov B.C."/>
            <person name="Dunn P."/>
            <person name="Durbin K.J."/>
            <person name="Evangelista C.C."/>
            <person name="Ferraz C."/>
            <person name="Ferriera S."/>
            <person name="Fleischmann W."/>
            <person name="Fosler C."/>
            <person name="Gabrielian A.E."/>
            <person name="Garg N.S."/>
            <person name="Gelbart W.M."/>
            <person name="Glasser K."/>
            <person name="Glodek A."/>
            <person name="Gong F."/>
            <person name="Gorrell J.H."/>
            <person name="Gu Z."/>
            <person name="Guan P."/>
            <person name="Harris M."/>
            <person name="Harris N.L."/>
            <person name="Harvey D.A."/>
            <person name="Heiman T.J."/>
            <person name="Hernandez J.R."/>
            <person name="Houck J."/>
            <person name="Hostin D."/>
            <person name="Houston K.A."/>
            <person name="Howland T.J."/>
            <person name="Wei M.-H."/>
            <person name="Ibegwam C."/>
            <person name="Jalali M."/>
            <person name="Kalush F."/>
            <person name="Karpen G.H."/>
            <person name="Ke Z."/>
            <person name="Kennison J.A."/>
            <person name="Ketchum K.A."/>
            <person name="Kimmel B.E."/>
            <person name="Kodira C.D."/>
            <person name="Kraft C.L."/>
            <person name="Kravitz S."/>
            <person name="Kulp D."/>
            <person name="Lai Z."/>
            <person name="Lasko P."/>
            <person name="Lei Y."/>
            <person name="Levitsky A.A."/>
            <person name="Li J.H."/>
            <person name="Li Z."/>
            <person name="Liang Y."/>
            <person name="Lin X."/>
            <person name="Liu X."/>
            <person name="Mattei B."/>
            <person name="McIntosh T.C."/>
            <person name="McLeod M.P."/>
            <person name="McPherson D."/>
            <person name="Merkulov G."/>
            <person name="Milshina N.V."/>
            <person name="Mobarry C."/>
            <person name="Morris J."/>
            <person name="Moshrefi A."/>
            <person name="Mount S.M."/>
            <person name="Moy M."/>
            <person name="Murphy B."/>
            <person name="Murphy L."/>
            <person name="Muzny D.M."/>
            <person name="Nelson D.L."/>
            <person name="Nelson D.R."/>
            <person name="Nelson K.A."/>
            <person name="Nixon K."/>
            <person name="Nusskern D.R."/>
            <person name="Pacleb J.M."/>
            <person name="Palazzolo M."/>
            <person name="Pittman G.S."/>
            <person name="Pan S."/>
            <person name="Pollard J."/>
            <person name="Puri V."/>
            <person name="Reese M.G."/>
            <person name="Reinert K."/>
            <person name="Remington K."/>
            <person name="Saunders R.D.C."/>
            <person name="Scheeler F."/>
            <person name="Shen H."/>
            <person name="Shue B.C."/>
            <person name="Siden-Kiamos I."/>
            <person name="Simpson M."/>
            <person name="Skupski M.P."/>
            <person name="Smith T.J."/>
            <person name="Spier E."/>
            <person name="Spradling A.C."/>
            <person name="Stapleton M."/>
            <person name="Strong R."/>
            <person name="Sun E."/>
            <person name="Svirskas R."/>
            <person name="Tector C."/>
            <person name="Turner R."/>
            <person name="Venter E."/>
            <person name="Wang A.H."/>
            <person name="Wang X."/>
            <person name="Wang Z.-Y."/>
            <person name="Wassarman D.A."/>
            <person name="Weinstock G.M."/>
            <person name="Weissenbach J."/>
            <person name="Williams S.M."/>
            <person name="Woodage T."/>
            <person name="Worley K.C."/>
            <person name="Wu D."/>
            <person name="Yang S."/>
            <person name="Yao Q.A."/>
            <person name="Ye J."/>
            <person name="Yeh R.-F."/>
            <person name="Zaveri J.S."/>
            <person name="Zhan M."/>
            <person name="Zhang G."/>
            <person name="Zhao Q."/>
            <person name="Zheng L."/>
            <person name="Zheng X.H."/>
            <person name="Zhong F.N."/>
            <person name="Zhong W."/>
            <person name="Zhou X."/>
            <person name="Zhu S.C."/>
            <person name="Zhu X."/>
            <person name="Smith H.O."/>
            <person name="Gibbs R.A."/>
            <person name="Myers E.W."/>
            <person name="Rubin G.M."/>
            <person name="Venter J.C."/>
        </authorList>
    </citation>
    <scope>NUCLEOTIDE SEQUENCE [LARGE SCALE GENOMIC DNA]</scope>
    <source>
        <strain>Berkeley</strain>
    </source>
</reference>
<reference key="8">
    <citation type="journal article" date="2002" name="Genome Biol.">
        <title>Annotation of the Drosophila melanogaster euchromatic genome: a systematic review.</title>
        <authorList>
            <person name="Misra S."/>
            <person name="Crosby M.A."/>
            <person name="Mungall C.J."/>
            <person name="Matthews B.B."/>
            <person name="Campbell K.S."/>
            <person name="Hradecky P."/>
            <person name="Huang Y."/>
            <person name="Kaminker J.S."/>
            <person name="Millburn G.H."/>
            <person name="Prochnik S.E."/>
            <person name="Smith C.D."/>
            <person name="Tupy J.L."/>
            <person name="Whitfield E.J."/>
            <person name="Bayraktaroglu L."/>
            <person name="Berman B.P."/>
            <person name="Bettencourt B.R."/>
            <person name="Celniker S.E."/>
            <person name="de Grey A.D.N.J."/>
            <person name="Drysdale R.A."/>
            <person name="Harris N.L."/>
            <person name="Richter J."/>
            <person name="Russo S."/>
            <person name="Schroeder A.J."/>
            <person name="Shu S.Q."/>
            <person name="Stapleton M."/>
            <person name="Yamada C."/>
            <person name="Ashburner M."/>
            <person name="Gelbart W.M."/>
            <person name="Rubin G.M."/>
            <person name="Lewis S.E."/>
        </authorList>
    </citation>
    <scope>GENOME REANNOTATION</scope>
    <source>
        <strain>Berkeley</strain>
    </source>
</reference>
<evidence type="ECO:0000255" key="1"/>
<evidence type="ECO:0000255" key="2">
    <source>
        <dbReference type="PROSITE-ProRule" id="PRU00040"/>
    </source>
</evidence>
<evidence type="ECO:0000269" key="3">
    <source>
    </source>
</evidence>
<evidence type="ECO:0000269" key="4">
    <source>
    </source>
</evidence>
<evidence type="ECO:0000269" key="5">
    <source>
    </source>
</evidence>
<evidence type="ECO:0000269" key="6">
    <source>
    </source>
</evidence>
<evidence type="ECO:0000269" key="7">
    <source>
    </source>
</evidence>
<evidence type="ECO:0000269" key="8">
    <source ref="6"/>
</evidence>
<evidence type="ECO:0000305" key="9"/>